<accession>Q9A3H7</accession>
<evidence type="ECO:0000255" key="1">
    <source>
        <dbReference type="HAMAP-Rule" id="MF_01161"/>
    </source>
</evidence>
<organism>
    <name type="scientific">Caulobacter vibrioides (strain ATCC 19089 / CIP 103742 / CB 15)</name>
    <name type="common">Caulobacter crescentus</name>
    <dbReference type="NCBI Taxonomy" id="190650"/>
    <lineage>
        <taxon>Bacteria</taxon>
        <taxon>Pseudomonadati</taxon>
        <taxon>Pseudomonadota</taxon>
        <taxon>Alphaproteobacteria</taxon>
        <taxon>Caulobacterales</taxon>
        <taxon>Caulobacteraceae</taxon>
        <taxon>Caulobacter</taxon>
    </lineage>
</organism>
<gene>
    <name evidence="1" type="primary">tilS</name>
    <name type="ordered locus">CC_3227</name>
</gene>
<dbReference type="EC" id="6.3.4.19" evidence="1"/>
<dbReference type="EMBL" id="AE005673">
    <property type="protein sequence ID" value="AAK25189.1"/>
    <property type="molecule type" value="Genomic_DNA"/>
</dbReference>
<dbReference type="PIR" id="A87649">
    <property type="entry name" value="A87649"/>
</dbReference>
<dbReference type="RefSeq" id="NP_422021.1">
    <property type="nucleotide sequence ID" value="NC_002696.2"/>
</dbReference>
<dbReference type="RefSeq" id="WP_010921060.1">
    <property type="nucleotide sequence ID" value="NC_002696.2"/>
</dbReference>
<dbReference type="SMR" id="Q9A3H7"/>
<dbReference type="STRING" id="190650.CC_3227"/>
<dbReference type="EnsemblBacteria" id="AAK25189">
    <property type="protein sequence ID" value="AAK25189"/>
    <property type="gene ID" value="CC_3227"/>
</dbReference>
<dbReference type="KEGG" id="ccr:CC_3227"/>
<dbReference type="PATRIC" id="fig|190650.5.peg.3233"/>
<dbReference type="eggNOG" id="COG0037">
    <property type="taxonomic scope" value="Bacteria"/>
</dbReference>
<dbReference type="HOGENOM" id="CLU_018869_3_2_5"/>
<dbReference type="BioCyc" id="CAULO:CC3227-MONOMER"/>
<dbReference type="Proteomes" id="UP000001816">
    <property type="component" value="Chromosome"/>
</dbReference>
<dbReference type="GO" id="GO:0005737">
    <property type="term" value="C:cytoplasm"/>
    <property type="evidence" value="ECO:0007669"/>
    <property type="project" value="UniProtKB-SubCell"/>
</dbReference>
<dbReference type="GO" id="GO:0005524">
    <property type="term" value="F:ATP binding"/>
    <property type="evidence" value="ECO:0007669"/>
    <property type="project" value="UniProtKB-UniRule"/>
</dbReference>
<dbReference type="GO" id="GO:0032267">
    <property type="term" value="F:tRNA(Ile)-lysidine synthase activity"/>
    <property type="evidence" value="ECO:0007669"/>
    <property type="project" value="UniProtKB-EC"/>
</dbReference>
<dbReference type="GO" id="GO:0006400">
    <property type="term" value="P:tRNA modification"/>
    <property type="evidence" value="ECO:0007669"/>
    <property type="project" value="UniProtKB-UniRule"/>
</dbReference>
<dbReference type="CDD" id="cd01992">
    <property type="entry name" value="TilS_N"/>
    <property type="match status" value="1"/>
</dbReference>
<dbReference type="Gene3D" id="3.40.50.620">
    <property type="entry name" value="HUPs"/>
    <property type="match status" value="1"/>
</dbReference>
<dbReference type="HAMAP" id="MF_01161">
    <property type="entry name" value="tRNA_Ile_lys_synt"/>
    <property type="match status" value="1"/>
</dbReference>
<dbReference type="InterPro" id="IPR014729">
    <property type="entry name" value="Rossmann-like_a/b/a_fold"/>
</dbReference>
<dbReference type="InterPro" id="IPR011063">
    <property type="entry name" value="TilS/TtcA_N"/>
</dbReference>
<dbReference type="InterPro" id="IPR012094">
    <property type="entry name" value="tRNA_Ile_lys_synt"/>
</dbReference>
<dbReference type="InterPro" id="IPR012795">
    <property type="entry name" value="tRNA_Ile_lys_synt_N"/>
</dbReference>
<dbReference type="NCBIfam" id="TIGR02432">
    <property type="entry name" value="lysidine_TilS_N"/>
    <property type="match status" value="1"/>
</dbReference>
<dbReference type="PANTHER" id="PTHR43033">
    <property type="entry name" value="TRNA(ILE)-LYSIDINE SYNTHASE-RELATED"/>
    <property type="match status" value="1"/>
</dbReference>
<dbReference type="PANTHER" id="PTHR43033:SF1">
    <property type="entry name" value="TRNA(ILE)-LYSIDINE SYNTHASE-RELATED"/>
    <property type="match status" value="1"/>
</dbReference>
<dbReference type="Pfam" id="PF01171">
    <property type="entry name" value="ATP_bind_3"/>
    <property type="match status" value="1"/>
</dbReference>
<dbReference type="SUPFAM" id="SSF52402">
    <property type="entry name" value="Adenine nucleotide alpha hydrolases-like"/>
    <property type="match status" value="1"/>
</dbReference>
<feature type="chain" id="PRO_0000181672" description="tRNA(Ile)-lysidine synthase">
    <location>
        <begin position="1"/>
        <end position="408"/>
    </location>
</feature>
<feature type="binding site" evidence="1">
    <location>
        <begin position="27"/>
        <end position="32"/>
    </location>
    <ligand>
        <name>ATP</name>
        <dbReference type="ChEBI" id="CHEBI:30616"/>
    </ligand>
</feature>
<name>TILS_CAUVC</name>
<reference key="1">
    <citation type="journal article" date="2001" name="Proc. Natl. Acad. Sci. U.S.A.">
        <title>Complete genome sequence of Caulobacter crescentus.</title>
        <authorList>
            <person name="Nierman W.C."/>
            <person name="Feldblyum T.V."/>
            <person name="Laub M.T."/>
            <person name="Paulsen I.T."/>
            <person name="Nelson K.E."/>
            <person name="Eisen J.A."/>
            <person name="Heidelberg J.F."/>
            <person name="Alley M.R.K."/>
            <person name="Ohta N."/>
            <person name="Maddock J.R."/>
            <person name="Potocka I."/>
            <person name="Nelson W.C."/>
            <person name="Newton A."/>
            <person name="Stephens C."/>
            <person name="Phadke N.D."/>
            <person name="Ely B."/>
            <person name="DeBoy R.T."/>
            <person name="Dodson R.J."/>
            <person name="Durkin A.S."/>
            <person name="Gwinn M.L."/>
            <person name="Haft D.H."/>
            <person name="Kolonay J.F."/>
            <person name="Smit J."/>
            <person name="Craven M.B."/>
            <person name="Khouri H.M."/>
            <person name="Shetty J."/>
            <person name="Berry K.J."/>
            <person name="Utterback T.R."/>
            <person name="Tran K."/>
            <person name="Wolf A.M."/>
            <person name="Vamathevan J.J."/>
            <person name="Ermolaeva M.D."/>
            <person name="White O."/>
            <person name="Salzberg S.L."/>
            <person name="Venter J.C."/>
            <person name="Shapiro L."/>
            <person name="Fraser C.M."/>
        </authorList>
    </citation>
    <scope>NUCLEOTIDE SEQUENCE [LARGE SCALE GENOMIC DNA]</scope>
    <source>
        <strain>ATCC 19089 / CIP 103742 / CB 15</strain>
    </source>
</reference>
<sequence length="408" mass="43112">MRLDQVRAALDRRLDPASRAPLAVGFSGGGDSLFLLKTVLDWARPLDRPVLALVVDHQLQPQSTAWTAEAVAKARALGAAALGLTWTDQKPRTGLPAAARRARHALLATAAREAGARVLILGHTASDLAEGVAMRAEGSSVSNPRAWAPSPVWPEGRGLFVLRPLLTLTRAEIRDALTREGETWLDDPANLDLRYARARARAAGALTPLLPVRESPPPGVFEIDPAGAIRLPRDVVPAHLAAALLCASGAERPPRGDRLARLVERLRSGARFTATLAGARIEADQAVLICRDAGEAARGGLARLDLAPGACGVWDGRWEVVAGKTALAVVALRGRTSSLPAEQRARLSAIAPAVRPSLPVLLSLDGDAPGELVLDDLQLEADGEARVRSLVPDRFKAAVGLLDQESVT</sequence>
<protein>
    <recommendedName>
        <fullName evidence="1">tRNA(Ile)-lysidine synthase</fullName>
        <ecNumber evidence="1">6.3.4.19</ecNumber>
    </recommendedName>
    <alternativeName>
        <fullName evidence="1">tRNA(Ile)-2-lysyl-cytidine synthase</fullName>
    </alternativeName>
    <alternativeName>
        <fullName evidence="1">tRNA(Ile)-lysidine synthetase</fullName>
    </alternativeName>
</protein>
<comment type="function">
    <text evidence="1">Ligates lysine onto the cytidine present at position 34 of the AUA codon-specific tRNA(Ile) that contains the anticodon CAU, in an ATP-dependent manner. Cytidine is converted to lysidine, thus changing the amino acid specificity of the tRNA from methionine to isoleucine.</text>
</comment>
<comment type="catalytic activity">
    <reaction evidence="1">
        <text>cytidine(34) in tRNA(Ile2) + L-lysine + ATP = lysidine(34) in tRNA(Ile2) + AMP + diphosphate + H(+)</text>
        <dbReference type="Rhea" id="RHEA:43744"/>
        <dbReference type="Rhea" id="RHEA-COMP:10625"/>
        <dbReference type="Rhea" id="RHEA-COMP:10670"/>
        <dbReference type="ChEBI" id="CHEBI:15378"/>
        <dbReference type="ChEBI" id="CHEBI:30616"/>
        <dbReference type="ChEBI" id="CHEBI:32551"/>
        <dbReference type="ChEBI" id="CHEBI:33019"/>
        <dbReference type="ChEBI" id="CHEBI:82748"/>
        <dbReference type="ChEBI" id="CHEBI:83665"/>
        <dbReference type="ChEBI" id="CHEBI:456215"/>
        <dbReference type="EC" id="6.3.4.19"/>
    </reaction>
</comment>
<comment type="subcellular location">
    <subcellularLocation>
        <location evidence="1">Cytoplasm</location>
    </subcellularLocation>
</comment>
<comment type="domain">
    <text>The N-terminal region contains the highly conserved SGGXDS motif, predicted to be a P-loop motif involved in ATP binding.</text>
</comment>
<comment type="similarity">
    <text evidence="1">Belongs to the tRNA(Ile)-lysidine synthase family.</text>
</comment>
<keyword id="KW-0067">ATP-binding</keyword>
<keyword id="KW-0963">Cytoplasm</keyword>
<keyword id="KW-0436">Ligase</keyword>
<keyword id="KW-0547">Nucleotide-binding</keyword>
<keyword id="KW-1185">Reference proteome</keyword>
<keyword id="KW-0819">tRNA processing</keyword>
<proteinExistence type="inferred from homology"/>